<gene>
    <name evidence="1" type="primary">GPAT3</name>
    <name type="synonym">AGPAT9</name>
    <name type="ORF">RCJMB04_5j9</name>
</gene>
<evidence type="ECO:0000250" key="1">
    <source>
        <dbReference type="UniProtKB" id="Q53EU6"/>
    </source>
</evidence>
<evidence type="ECO:0000250" key="2">
    <source>
        <dbReference type="UniProtKB" id="Q9D517"/>
    </source>
</evidence>
<evidence type="ECO:0000255" key="3"/>
<evidence type="ECO:0000256" key="4">
    <source>
        <dbReference type="SAM" id="MobiDB-lite"/>
    </source>
</evidence>
<evidence type="ECO:0000305" key="5"/>
<organism>
    <name type="scientific">Gallus gallus</name>
    <name type="common">Chicken</name>
    <dbReference type="NCBI Taxonomy" id="9031"/>
    <lineage>
        <taxon>Eukaryota</taxon>
        <taxon>Metazoa</taxon>
        <taxon>Chordata</taxon>
        <taxon>Craniata</taxon>
        <taxon>Vertebrata</taxon>
        <taxon>Euteleostomi</taxon>
        <taxon>Archelosauria</taxon>
        <taxon>Archosauria</taxon>
        <taxon>Dinosauria</taxon>
        <taxon>Saurischia</taxon>
        <taxon>Theropoda</taxon>
        <taxon>Coelurosauria</taxon>
        <taxon>Aves</taxon>
        <taxon>Neognathae</taxon>
        <taxon>Galloanserae</taxon>
        <taxon>Galliformes</taxon>
        <taxon>Phasianidae</taxon>
        <taxon>Phasianinae</taxon>
        <taxon>Gallus</taxon>
    </lineage>
</organism>
<name>GPAT3_CHICK</name>
<dbReference type="EC" id="2.3.1.15" evidence="1"/>
<dbReference type="EC" id="2.3.1.51" evidence="1"/>
<dbReference type="EMBL" id="AJ719716">
    <property type="protein sequence ID" value="CAG31375.1"/>
    <property type="molecule type" value="mRNA"/>
</dbReference>
<dbReference type="RefSeq" id="NP_001026316.1">
    <property type="nucleotide sequence ID" value="NM_001031145.1"/>
</dbReference>
<dbReference type="FunCoup" id="Q5ZLL8">
    <property type="interactions" value="669"/>
</dbReference>
<dbReference type="STRING" id="9031.ENSGALP00000018276"/>
<dbReference type="PaxDb" id="9031-ENSGALP00000018276"/>
<dbReference type="GeneID" id="422610"/>
<dbReference type="KEGG" id="gga:422610"/>
<dbReference type="CTD" id="84803"/>
<dbReference type="VEuPathDB" id="HostDB:geneid_422610"/>
<dbReference type="eggNOG" id="KOG2898">
    <property type="taxonomic scope" value="Eukaryota"/>
</dbReference>
<dbReference type="HOGENOM" id="CLU_031080_0_1_1"/>
<dbReference type="InParanoid" id="Q5ZLL8"/>
<dbReference type="OrthoDB" id="10051137at2759"/>
<dbReference type="PhylomeDB" id="Q5ZLL8"/>
<dbReference type="Reactome" id="R-GGA-1483166">
    <property type="pathway name" value="Synthesis of PA"/>
</dbReference>
<dbReference type="UniPathway" id="UPA00282"/>
<dbReference type="UniPathway" id="UPA00557">
    <property type="reaction ID" value="UER00612"/>
</dbReference>
<dbReference type="PRO" id="PR:Q5ZLL8"/>
<dbReference type="Proteomes" id="UP000000539">
    <property type="component" value="Chromosome 4"/>
</dbReference>
<dbReference type="Bgee" id="ENSGALG00000011221">
    <property type="expression patterns" value="Expressed in spermatocyte and 13 other cell types or tissues"/>
</dbReference>
<dbReference type="GO" id="GO:0005783">
    <property type="term" value="C:endoplasmic reticulum"/>
    <property type="evidence" value="ECO:0000250"/>
    <property type="project" value="UniProtKB"/>
</dbReference>
<dbReference type="GO" id="GO:0005789">
    <property type="term" value="C:endoplasmic reticulum membrane"/>
    <property type="evidence" value="ECO:0000250"/>
    <property type="project" value="UniProtKB"/>
</dbReference>
<dbReference type="GO" id="GO:0003841">
    <property type="term" value="F:1-acylglycerol-3-phosphate O-acyltransferase activity"/>
    <property type="evidence" value="ECO:0000250"/>
    <property type="project" value="UniProtKB"/>
</dbReference>
<dbReference type="GO" id="GO:0004366">
    <property type="term" value="F:glycerol-3-phosphate O-acyltransferase activity"/>
    <property type="evidence" value="ECO:0000250"/>
    <property type="project" value="UniProtKB"/>
</dbReference>
<dbReference type="GO" id="GO:0016024">
    <property type="term" value="P:CDP-diacylglycerol biosynthetic process"/>
    <property type="evidence" value="ECO:0007669"/>
    <property type="project" value="UniProtKB-UniPathway"/>
</dbReference>
<dbReference type="GO" id="GO:0019432">
    <property type="term" value="P:triglyceride biosynthetic process"/>
    <property type="evidence" value="ECO:0000250"/>
    <property type="project" value="UniProtKB"/>
</dbReference>
<dbReference type="CDD" id="cd07991">
    <property type="entry name" value="LPLAT_LPCAT1-like"/>
    <property type="match status" value="1"/>
</dbReference>
<dbReference type="InterPro" id="IPR045252">
    <property type="entry name" value="LPCAT1-like"/>
</dbReference>
<dbReference type="InterPro" id="IPR002123">
    <property type="entry name" value="Plipid/glycerol_acylTrfase"/>
</dbReference>
<dbReference type="PANTHER" id="PTHR23063:SF10">
    <property type="entry name" value="GLYCEROL-3-PHOSPHATE ACYLTRANSFERASE 3"/>
    <property type="match status" value="1"/>
</dbReference>
<dbReference type="PANTHER" id="PTHR23063">
    <property type="entry name" value="PHOSPHOLIPID ACYLTRANSFERASE"/>
    <property type="match status" value="1"/>
</dbReference>
<dbReference type="Pfam" id="PF01553">
    <property type="entry name" value="Acyltransferase"/>
    <property type="match status" value="1"/>
</dbReference>
<dbReference type="SMART" id="SM00563">
    <property type="entry name" value="PlsC"/>
    <property type="match status" value="1"/>
</dbReference>
<dbReference type="SUPFAM" id="SSF69593">
    <property type="entry name" value="Glycerol-3-phosphate (1)-acyltransferase"/>
    <property type="match status" value="1"/>
</dbReference>
<protein>
    <recommendedName>
        <fullName evidence="1">Glycerol-3-phosphate acyltransferase 3</fullName>
        <shortName>GPAT-3</shortName>
        <ecNumber evidence="1">2.3.1.15</ecNumber>
    </recommendedName>
    <alternativeName>
        <fullName evidence="1">1-acyl-sn-glycerol-3-phosphate O-acyltransferase 10</fullName>
        <shortName evidence="1">AGPAT 10</shortName>
    </alternativeName>
    <alternativeName>
        <fullName>1-acyl-sn-glycerol-3-phosphate O-acyltransferase 9</fullName>
        <shortName>1-AGP acyltransferase 9</shortName>
        <shortName>1-AGPAT 9</shortName>
        <ecNumber evidence="1">2.3.1.51</ecNumber>
    </alternativeName>
    <alternativeName>
        <fullName>Lysophosphatidic acid acyltransferase theta</fullName>
        <shortName>LPAAT-theta</shortName>
    </alternativeName>
</protein>
<proteinExistence type="evidence at transcript level"/>
<sequence>MEELGSLAVWLGAAWLSLVFALIVLPSALGVSLGISEAYMWVLVKTLEWATIRIEKGVKKPQPQMLKIPAANGIIERDETPMEKEIAGLHRMEFRFSDIFYFCRKGFEAIVEDEVTQRFSSEELVSWNLLTRTNVNFHYVSLRLTVVWVIGVIVRYCFLLPLRFTLAAIGITSMIVGTTVVGQLPNGSLKNYLSEVVHLTCSRILVRALSGTIHYHNKENKPQKGGICVANHTSPIDAIILTNDGCYAMVGQVHGGLMGVIQRATVKACPHVWFERSEIKDRHLVTKRLREHVADKNKLPILIFPEGTCINNTSVMMFKKGSFEIGGTIYPVAIKYDPQFGDAFWNSSKYNIVSYLLRIMTSWAIVCHVWYMPPMVRKEGEDAVQFANRVRSAIARQGGLTELPWDGGLKRAKVKDSFKEEQQKNYSKMLVRNGSQGNLPAGTESD</sequence>
<reference key="1">
    <citation type="journal article" date="2005" name="Genome Biol.">
        <title>Full-length cDNAs from chicken bursal lymphocytes to facilitate gene function analysis.</title>
        <authorList>
            <person name="Caldwell R.B."/>
            <person name="Kierzek A.M."/>
            <person name="Arakawa H."/>
            <person name="Bezzubov Y."/>
            <person name="Zaim J."/>
            <person name="Fiedler P."/>
            <person name="Kutter S."/>
            <person name="Blagodatski A."/>
            <person name="Kostovska D."/>
            <person name="Koter M."/>
            <person name="Plachy J."/>
            <person name="Carninci P."/>
            <person name="Hayashizaki Y."/>
            <person name="Buerstedde J.-M."/>
        </authorList>
    </citation>
    <scope>NUCLEOTIDE SEQUENCE [LARGE SCALE MRNA]</scope>
    <source>
        <strain>CB</strain>
        <tissue>Bursa of Fabricius</tissue>
    </source>
</reference>
<accession>Q5ZLL8</accession>
<feature type="chain" id="PRO_0000291573" description="Glycerol-3-phosphate acyltransferase 3">
    <location>
        <begin position="1"/>
        <end position="446"/>
    </location>
</feature>
<feature type="transmembrane region" description="Helical" evidence="3">
    <location>
        <begin position="25"/>
        <end position="45"/>
    </location>
</feature>
<feature type="transmembrane region" description="Helical" evidence="3">
    <location>
        <begin position="142"/>
        <end position="162"/>
    </location>
</feature>
<feature type="transmembrane region" description="Helical" evidence="3">
    <location>
        <begin position="164"/>
        <end position="184"/>
    </location>
</feature>
<feature type="transmembrane region" description="Helical" evidence="3">
    <location>
        <begin position="352"/>
        <end position="372"/>
    </location>
</feature>
<feature type="region of interest" description="Disordered" evidence="4">
    <location>
        <begin position="418"/>
        <end position="446"/>
    </location>
</feature>
<feature type="short sequence motif" description="HXXXXD motif" evidence="2">
    <location>
        <begin position="232"/>
        <end position="237"/>
    </location>
</feature>
<comment type="function">
    <text evidence="1">Converts glycerol-3-phosphate to 1-acyl-sn-glycerol-3-phosphate (lysophosphatidic acid or LPA) by incorporating an acyl moiety at the sn-1 position of the glycerol backbone. Also converts LPA into 1,2-diacyl-sn-glycerol-3-phosphate (phosphatidic acid or PA) by incorporating an acyl moiety at the sn-2 position of the glycerol backbone. Protects cells against lipotoxicity.</text>
</comment>
<comment type="catalytic activity">
    <reaction evidence="1">
        <text>sn-glycerol 3-phosphate + an acyl-CoA = a 1-acyl-sn-glycero-3-phosphate + CoA</text>
        <dbReference type="Rhea" id="RHEA:15325"/>
        <dbReference type="ChEBI" id="CHEBI:57287"/>
        <dbReference type="ChEBI" id="CHEBI:57597"/>
        <dbReference type="ChEBI" id="CHEBI:57970"/>
        <dbReference type="ChEBI" id="CHEBI:58342"/>
        <dbReference type="EC" id="2.3.1.15"/>
    </reaction>
    <physiologicalReaction direction="left-to-right" evidence="1">
        <dbReference type="Rhea" id="RHEA:15326"/>
    </physiologicalReaction>
</comment>
<comment type="catalytic activity">
    <reaction evidence="1">
        <text>a 1-acyl-sn-glycero-3-phosphate + an acyl-CoA = a 1,2-diacyl-sn-glycero-3-phosphate + CoA</text>
        <dbReference type="Rhea" id="RHEA:19709"/>
        <dbReference type="ChEBI" id="CHEBI:57287"/>
        <dbReference type="ChEBI" id="CHEBI:57970"/>
        <dbReference type="ChEBI" id="CHEBI:58342"/>
        <dbReference type="ChEBI" id="CHEBI:58608"/>
        <dbReference type="EC" id="2.3.1.51"/>
    </reaction>
    <physiologicalReaction direction="left-to-right" evidence="1">
        <dbReference type="Rhea" id="RHEA:19710"/>
    </physiologicalReaction>
</comment>
<comment type="catalytic activity">
    <reaction evidence="1">
        <text>dodecanoyl-CoA + sn-glycerol 3-phosphate = 1-dodecanoyl-sn-glycerol 3-phosphate + CoA</text>
        <dbReference type="Rhea" id="RHEA:35727"/>
        <dbReference type="ChEBI" id="CHEBI:57287"/>
        <dbReference type="ChEBI" id="CHEBI:57375"/>
        <dbReference type="ChEBI" id="CHEBI:57597"/>
        <dbReference type="ChEBI" id="CHEBI:72682"/>
    </reaction>
    <physiologicalReaction direction="left-to-right" evidence="1">
        <dbReference type="Rhea" id="RHEA:35728"/>
    </physiologicalReaction>
</comment>
<comment type="catalytic activity">
    <reaction evidence="1">
        <text>sn-glycerol 3-phosphate + hexadecanoyl-CoA = 1-hexadecanoyl-sn-glycero-3-phosphate + CoA</text>
        <dbReference type="Rhea" id="RHEA:35723"/>
        <dbReference type="ChEBI" id="CHEBI:57287"/>
        <dbReference type="ChEBI" id="CHEBI:57379"/>
        <dbReference type="ChEBI" id="CHEBI:57518"/>
        <dbReference type="ChEBI" id="CHEBI:57597"/>
    </reaction>
    <physiologicalReaction direction="left-to-right" evidence="1">
        <dbReference type="Rhea" id="RHEA:35724"/>
    </physiologicalReaction>
</comment>
<comment type="catalytic activity">
    <reaction evidence="1">
        <text>sn-glycerol 3-phosphate + (9Z)-octadecenoyl-CoA = 1-(9Z-octadecenoyl)-sn-glycero-3-phosphate + CoA</text>
        <dbReference type="Rhea" id="RHEA:37199"/>
        <dbReference type="ChEBI" id="CHEBI:57287"/>
        <dbReference type="ChEBI" id="CHEBI:57387"/>
        <dbReference type="ChEBI" id="CHEBI:57597"/>
        <dbReference type="ChEBI" id="CHEBI:74544"/>
    </reaction>
    <physiologicalReaction direction="left-to-right" evidence="1">
        <dbReference type="Rhea" id="RHEA:37200"/>
    </physiologicalReaction>
</comment>
<comment type="catalytic activity">
    <reaction evidence="1">
        <text>(9Z,12Z)-octadecadienoyl-CoA + sn-glycerol 3-phosphate = 1-(9Z,12Z)-octadecadienoyl-sn-glycero-3-phosphate + CoA</text>
        <dbReference type="Rhea" id="RHEA:37203"/>
        <dbReference type="ChEBI" id="CHEBI:57287"/>
        <dbReference type="ChEBI" id="CHEBI:57383"/>
        <dbReference type="ChEBI" id="CHEBI:57597"/>
        <dbReference type="ChEBI" id="CHEBI:74547"/>
    </reaction>
    <physiologicalReaction direction="left-to-right" evidence="1">
        <dbReference type="Rhea" id="RHEA:37204"/>
    </physiologicalReaction>
</comment>
<comment type="catalytic activity">
    <reaction evidence="1">
        <text>1-tetradecanoyl-sn-glycerol 3-phosphate + (9Z)-octadecenoyl-CoA = 1-tetradecanoyl-2-(9Z)-octadecenoyl-sn-glycero-3-phosphate + CoA</text>
        <dbReference type="Rhea" id="RHEA:37187"/>
        <dbReference type="ChEBI" id="CHEBI:57287"/>
        <dbReference type="ChEBI" id="CHEBI:57387"/>
        <dbReference type="ChEBI" id="CHEBI:72683"/>
        <dbReference type="ChEBI" id="CHEBI:74586"/>
    </reaction>
    <physiologicalReaction direction="left-to-right" evidence="1">
        <dbReference type="Rhea" id="RHEA:37188"/>
    </physiologicalReaction>
</comment>
<comment type="catalytic activity">
    <reaction evidence="1">
        <text>1-hexadecanoyl-sn-glycero-3-phosphate + (9Z)-octadecenoyl-CoA = 1-hexadecanoyl-2-(9Z-octadecenoyl)-sn-glycero-3-phosphate + CoA</text>
        <dbReference type="Rhea" id="RHEA:33187"/>
        <dbReference type="ChEBI" id="CHEBI:57287"/>
        <dbReference type="ChEBI" id="CHEBI:57387"/>
        <dbReference type="ChEBI" id="CHEBI:57518"/>
        <dbReference type="ChEBI" id="CHEBI:64839"/>
    </reaction>
    <physiologicalReaction direction="left-to-right" evidence="1">
        <dbReference type="Rhea" id="RHEA:33188"/>
    </physiologicalReaction>
</comment>
<comment type="catalytic activity">
    <reaction evidence="1">
        <text>1-(9Z-octadecenoyl)-sn-glycero-3-phosphate + (9Z)-octadecenoyl-CoA = 1,2-di-(9Z-octadecenoyl)-sn-glycero-3-phosphate + CoA</text>
        <dbReference type="Rhea" id="RHEA:37131"/>
        <dbReference type="ChEBI" id="CHEBI:57287"/>
        <dbReference type="ChEBI" id="CHEBI:57387"/>
        <dbReference type="ChEBI" id="CHEBI:74544"/>
        <dbReference type="ChEBI" id="CHEBI:74546"/>
    </reaction>
    <physiologicalReaction direction="left-to-right" evidence="1">
        <dbReference type="Rhea" id="RHEA:37132"/>
    </physiologicalReaction>
</comment>
<comment type="catalytic activity">
    <reaction evidence="1">
        <text>1-(6Z,9Z,12Z-octadecatrienoyl)-sn-glycero-3-phosphate + (9Z)-octadecenoyl-CoA = (6Z,9Z,12Z)-octadecatrienoyl-2-(9Z)-octadecenoyl-sn-glycero-3-phosphate + CoA</text>
        <dbReference type="Rhea" id="RHEA:37179"/>
        <dbReference type="ChEBI" id="CHEBI:57287"/>
        <dbReference type="ChEBI" id="CHEBI:57387"/>
        <dbReference type="ChEBI" id="CHEBI:74581"/>
        <dbReference type="ChEBI" id="CHEBI:74582"/>
    </reaction>
    <physiologicalReaction direction="left-to-right" evidence="1">
        <dbReference type="Rhea" id="RHEA:37180"/>
    </physiologicalReaction>
</comment>
<comment type="catalytic activity">
    <reaction evidence="1">
        <text>1-(9Z,12Z,15Z)-octadecatrienoyl-sn-glycero-3-phosphate + (9Z)-octadecenoyl-CoA = 1-(9Z,12Z,15Z)-octadecatrienoyl-2-(9Z)-octadecenoyl-sn-glycero-3-phosphate + CoA</text>
        <dbReference type="Rhea" id="RHEA:37139"/>
        <dbReference type="ChEBI" id="CHEBI:57287"/>
        <dbReference type="ChEBI" id="CHEBI:57387"/>
        <dbReference type="ChEBI" id="CHEBI:74549"/>
        <dbReference type="ChEBI" id="CHEBI:74550"/>
    </reaction>
    <physiologicalReaction direction="left-to-right" evidence="1">
        <dbReference type="Rhea" id="RHEA:37140"/>
    </physiologicalReaction>
</comment>
<comment type="catalytic activity">
    <reaction evidence="1">
        <text>1-(9Z-octadecenoyl)-sn-glycero-3-phosphate + tetradecanoyl-CoA = 1-(9Z)-octadecenoyl-2-tetradecanoyl-sn-glycero-3-phosphate + CoA</text>
        <dbReference type="Rhea" id="RHEA:37171"/>
        <dbReference type="ChEBI" id="CHEBI:57287"/>
        <dbReference type="ChEBI" id="CHEBI:57385"/>
        <dbReference type="ChEBI" id="CHEBI:74544"/>
        <dbReference type="ChEBI" id="CHEBI:74579"/>
    </reaction>
    <physiologicalReaction direction="left-to-right" evidence="1">
        <dbReference type="Rhea" id="RHEA:37172"/>
    </physiologicalReaction>
</comment>
<comment type="catalytic activity">
    <reaction evidence="1">
        <text>1-(9Z-octadecenoyl)-sn-glycero-3-phosphate + hexadecanoyl-CoA = 1-(9Z)-octadecenoyl-2-hexadecanoyl-sn-glycero-3-phosphate + CoA</text>
        <dbReference type="Rhea" id="RHEA:37143"/>
        <dbReference type="ChEBI" id="CHEBI:57287"/>
        <dbReference type="ChEBI" id="CHEBI:57379"/>
        <dbReference type="ChEBI" id="CHEBI:74544"/>
        <dbReference type="ChEBI" id="CHEBI:74551"/>
    </reaction>
    <physiologicalReaction direction="left-to-right" evidence="1">
        <dbReference type="Rhea" id="RHEA:37144"/>
    </physiologicalReaction>
</comment>
<comment type="catalytic activity">
    <reaction evidence="1">
        <text>1-(9Z-octadecenoyl)-sn-glycero-3-phosphate + octadecanoyl-CoA = 1-(9Z-octadecenoyl)-2-octadecanoyl-sn-glycero-3-phosphate + CoA</text>
        <dbReference type="Rhea" id="RHEA:37147"/>
        <dbReference type="ChEBI" id="CHEBI:57287"/>
        <dbReference type="ChEBI" id="CHEBI:57394"/>
        <dbReference type="ChEBI" id="CHEBI:74544"/>
        <dbReference type="ChEBI" id="CHEBI:74552"/>
    </reaction>
    <physiologicalReaction direction="left-to-right" evidence="1">
        <dbReference type="Rhea" id="RHEA:37148"/>
    </physiologicalReaction>
</comment>
<comment type="catalytic activity">
    <reaction evidence="1">
        <text>1-(9Z-octadecenoyl)-sn-glycero-3-phosphate + (9Z,12Z)-octadecadienoyl-CoA = 1-(9Z)-octadecenoyl-2-(9Z,12Z)-octadecadienoyl-sn-glycero-3-phosphate + CoA</text>
        <dbReference type="Rhea" id="RHEA:37159"/>
        <dbReference type="ChEBI" id="CHEBI:57287"/>
        <dbReference type="ChEBI" id="CHEBI:57383"/>
        <dbReference type="ChEBI" id="CHEBI:74544"/>
        <dbReference type="ChEBI" id="CHEBI:74563"/>
    </reaction>
    <physiologicalReaction direction="left-to-right" evidence="1">
        <dbReference type="Rhea" id="RHEA:37160"/>
    </physiologicalReaction>
</comment>
<comment type="catalytic activity">
    <reaction evidence="1">
        <text>1-(5Z,8Z,11Z,14Z-eicosatetraenoyl)-sn-glycero-3-phosphate + (9Z)-octadecenoyl-CoA = 1-(5Z,8Z,11Z,14Z)-eicosatetraenoyl-2-(9Z)-octadecenoyl-sn-glycero-3-phosphate + CoA</text>
        <dbReference type="Rhea" id="RHEA:37455"/>
        <dbReference type="ChEBI" id="CHEBI:57287"/>
        <dbReference type="ChEBI" id="CHEBI:57387"/>
        <dbReference type="ChEBI" id="CHEBI:74938"/>
        <dbReference type="ChEBI" id="CHEBI:74941"/>
    </reaction>
    <physiologicalReaction direction="left-to-right" evidence="1">
        <dbReference type="Rhea" id="RHEA:37456"/>
    </physiologicalReaction>
</comment>
<comment type="pathway">
    <text>Glycerolipid metabolism; triacylglycerol biosynthesis.</text>
</comment>
<comment type="pathway">
    <text>Phospholipid metabolism; CDP-diacylglycerol biosynthesis; CDP-diacylglycerol from sn-glycerol 3-phosphate: step 1/3.</text>
</comment>
<comment type="subcellular location">
    <subcellularLocation>
        <location evidence="1">Endoplasmic reticulum membrane</location>
        <topology evidence="3">Multi-pass membrane protein</topology>
    </subcellularLocation>
</comment>
<comment type="domain">
    <text evidence="2">The HXXXXD motif is essential for acyltransferase activity and may constitute the binding site for the phosphate moiety of the glycerol-3-phosphate.</text>
</comment>
<comment type="similarity">
    <text evidence="5">Belongs to the 1-acyl-sn-glycerol-3-phosphate acyltransferase family.</text>
</comment>
<keyword id="KW-0012">Acyltransferase</keyword>
<keyword id="KW-0256">Endoplasmic reticulum</keyword>
<keyword id="KW-0444">Lipid biosynthesis</keyword>
<keyword id="KW-0443">Lipid metabolism</keyword>
<keyword id="KW-0472">Membrane</keyword>
<keyword id="KW-0594">Phospholipid biosynthesis</keyword>
<keyword id="KW-1208">Phospholipid metabolism</keyword>
<keyword id="KW-1185">Reference proteome</keyword>
<keyword id="KW-0808">Transferase</keyword>
<keyword id="KW-0812">Transmembrane</keyword>
<keyword id="KW-1133">Transmembrane helix</keyword>